<accession>A1XGT0</accession>
<feature type="chain" id="PRO_0000343791" description="Protein Ycf2">
    <location>
        <begin position="1"/>
        <end position="2294"/>
    </location>
</feature>
<feature type="binding site" evidence="1">
    <location>
        <begin position="1635"/>
        <end position="1642"/>
    </location>
    <ligand>
        <name>ATP</name>
        <dbReference type="ChEBI" id="CHEBI:30616"/>
    </ligand>
</feature>
<evidence type="ECO:0000255" key="1">
    <source>
        <dbReference type="HAMAP-Rule" id="MF_01330"/>
    </source>
</evidence>
<dbReference type="EMBL" id="DQ359689">
    <property type="protein sequence ID" value="ABC70798.1"/>
    <property type="molecule type" value="Genomic_DNA"/>
</dbReference>
<dbReference type="EMBL" id="DQ359689">
    <property type="protein sequence ID" value="ABC70815.1"/>
    <property type="molecule type" value="Genomic_DNA"/>
</dbReference>
<dbReference type="GO" id="GO:0009570">
    <property type="term" value="C:chloroplast stroma"/>
    <property type="evidence" value="ECO:0007669"/>
    <property type="project" value="UniProtKB-SubCell"/>
</dbReference>
<dbReference type="GO" id="GO:0005524">
    <property type="term" value="F:ATP binding"/>
    <property type="evidence" value="ECO:0007669"/>
    <property type="project" value="UniProtKB-KW"/>
</dbReference>
<dbReference type="GO" id="GO:0016887">
    <property type="term" value="F:ATP hydrolysis activity"/>
    <property type="evidence" value="ECO:0007669"/>
    <property type="project" value="InterPro"/>
</dbReference>
<dbReference type="CDD" id="cd19505">
    <property type="entry name" value="RecA-like_Ycf2"/>
    <property type="match status" value="1"/>
</dbReference>
<dbReference type="Gene3D" id="3.40.50.300">
    <property type="entry name" value="P-loop containing nucleotide triphosphate hydrolases"/>
    <property type="match status" value="1"/>
</dbReference>
<dbReference type="HAMAP" id="MF_01330">
    <property type="entry name" value="Ycf2"/>
    <property type="match status" value="1"/>
</dbReference>
<dbReference type="InterPro" id="IPR003593">
    <property type="entry name" value="AAA+_ATPase"/>
</dbReference>
<dbReference type="InterPro" id="IPR003959">
    <property type="entry name" value="ATPase_AAA_core"/>
</dbReference>
<dbReference type="InterPro" id="IPR027417">
    <property type="entry name" value="P-loop_NTPase"/>
</dbReference>
<dbReference type="InterPro" id="IPR008543">
    <property type="entry name" value="Uncharacterised_Ycf2"/>
</dbReference>
<dbReference type="InterPro" id="IPR056777">
    <property type="entry name" value="Ycf2_N"/>
</dbReference>
<dbReference type="PANTHER" id="PTHR33078:SF89">
    <property type="entry name" value="PROTEIN YCF2"/>
    <property type="match status" value="1"/>
</dbReference>
<dbReference type="PANTHER" id="PTHR33078">
    <property type="entry name" value="PROTEIN YCF2-RELATED"/>
    <property type="match status" value="1"/>
</dbReference>
<dbReference type="Pfam" id="PF00004">
    <property type="entry name" value="AAA"/>
    <property type="match status" value="1"/>
</dbReference>
<dbReference type="Pfam" id="PF05695">
    <property type="entry name" value="Ycf2"/>
    <property type="match status" value="1"/>
</dbReference>
<dbReference type="SMART" id="SM00382">
    <property type="entry name" value="AAA"/>
    <property type="match status" value="1"/>
</dbReference>
<dbReference type="SUPFAM" id="SSF52540">
    <property type="entry name" value="P-loop containing nucleoside triphosphate hydrolases"/>
    <property type="match status" value="1"/>
</dbReference>
<protein>
    <recommendedName>
        <fullName evidence="1">Protein Ycf2</fullName>
    </recommendedName>
</protein>
<sequence>MKRHPLKSWIFELREILREIKNSHYFLDSWTKFDSVGSFTHIFFHQERFMKLFDPRIWSILLSRDSQGLTSNRYFTIKGVVLLAVAVLIYRINSRNMVERKNIYLMGLLPIPMNSIGPRNDALEESFGSSNINRLIVSLLYLPKGKKISESCFMDPKESTLVLPITKKCIMPESNWGSRWRRNQIGKRRDSSCKISNETVAGIEISFKEKDLKYLESPFVSYTDDPIRKDHDWELFDRLSPRKKRNIINLNSGQLFEILVKHWICYLMSAFREKRPIEVEGFFKQQGAGSTIQSNDIERVSHLLSRNKWGISLQNCAQFHMWQFRQDLFVSWGKNPHELDFLRNVSRENWIWLDSVRLVNKDRFFSKVRNVSSNMQYDSTRSIFVQVTDSSQLKGSSDQSRDHLDSISHEDSEYHTLINQSEIQQLKERSILWDPSFFQTERTEIELDRFPKRLSGDSSMSRLFTEREKPMIIHRLPEEIEEFLGNPTRSIRSFFSDRWSELHLGSNPTEGSTRDQKLLKKQQDFSFVPSRRSENKEMVDIFRIITYLQNTVSIHPILSDPGCDMVPKDEPDMDSSNKISFLNQNSFFYLFHLFHDRNRGGYTLHHDFESEEKFQEMADLLTLSITEPDLVYHKGSAFSIDSYRLDQKKFLNEVFNSRDESKKKSLLVLPPIFYEENESFYQRIRKKWVQISCGNALEDPKQKRVVFASNNIMKAVNQYRFIQNLIQIQYSTHGYIRNVSNQFFKRSDRNFEYGIQRDQIGNDTLNHRTIMKYTINQHLSNLKKSQKKWFDPLISRTERSTNRYPDAYRYKWSKGSKNLQEHLEHFVAEQKSLFQVVFDRLRINQNSIDWSEVIDKQYFSKSLRFFLSKSLLFLSKSLPFFFVSIGNIPSHRSEIHIYELKGPNDQLCNQLLESIGVQIVHLNKWKSFLLDDHDTSQKSKFLINGGRISPFLFNKIPKWMIESFHTRNNRRKSFDNADSYFSMISHDRDNWLNPAKPFHRSSLISSFYKANRLRFLNNPHHFWFYCNKRFPFYVEKARINKYDLTYGQFLNILFIRKKIFSLCVGKGKKKHVFGERDTISPIESQVSNIFIPNDFPQSGDETYNLYKSFHFPIRPAPFVRRALYSIADISGTPLTEGQIVHFERTYCQPLSDMNPSDSEGKNLHQYFNFNSNMGLIHTPYSEKYLPSEKRKKRSLCLKKCVEKRQMYRTFQRDSTFSNLSKLNLFQTYMPWFLTSAGCKYLNLTLLDTFSDLLPILSISQKWVSIFHDIMRGSDISWPIPQKKLWAILPQWNLISEISSKCLHDLLLSEETIRRHNESPVPLIWAHLRSPNARELLYSILFFLLVAGYLVRTHLLFVSRASSELQTEFEKIKSLMIPSYMIELRKLLDGYPTSERNSFWLKNLFLVALKQFGDSLEEIRGSASGGNMLLGGGPAYGVKSIRSKKKYWNINLVDIMDLISIIPNPINRITFSRNTGHLSRTSKEIYSLIRKRKNVNGDWIDDKIESWVANSDSIDDEEREFLVQFSTLTTEKRIDQILLSLTHSDHLSKNDSGYQMIEQPGSVYLRYLVDIHKKNLMNYEFNRSCIAERRIFLAHSQTITYSQTSCGANSFHFPSPGKPFSLRLALSPSRGILVIGSIGTGRSYLVKYLATNSYVPFITVFPNKFLDDKPKGYLIDDIDIDDSDDIDDSDDIDDSDDIDDDLDTELLTMTNALTMYITPKIDRFDITLPFELAKAMSPCIIWIPNIHDLYVNESNYLSLGLLVNHLSRDCERCSTRNILVIASTHIPQKVDPALIAPNKSNTCIKIRRLLIPQQRKHFFTLSYTRGFYLEKKMFHTNGFGSITMGSNARDLVALTNEALSISITQKKSIIDTNTIRSALHKQTWDLRSQVRSVQDHGILFYQIGRAIAQNVLLSNCPIDPISIYMKKKSCKEGDSYLYKWYFELGTSMKKLTILLYLLSCSAGSVAQDLWSPPGPDEKNGITSYGFVENDSDLVHGLLEVEGVLVGSSPTEKDCSQFYKDRVTLLLRSEPRNPFDMMQNGSYSIVDQRFLYEKYELEFEEGGGEGALDPQQLEEDLFNHIVWAPRIWHPCGNLFDCIERPNELGFPYWARSFRGKRIIYHKEDELEENDSEFLQSGTMQYQTRDRSSKEQGFFRISQFIWDPADPFLFLFKDQPFVSVFSRREFFADQEMPKGLLTSQTNSPTSIYKRWFIKNTQEKHFELLIHRQRWLRTNSSLSNGSFRSNTLSESYQYLSNLFLSNGTLLDQMTKTLLRKRWLFPDEMKHLIHVTGERFPIP</sequence>
<proteinExistence type="inferred from homology"/>
<name>YCF2_RANMC</name>
<geneLocation type="chloroplast"/>
<keyword id="KW-0067">ATP-binding</keyword>
<keyword id="KW-0150">Chloroplast</keyword>
<keyword id="KW-0547">Nucleotide-binding</keyword>
<keyword id="KW-0934">Plastid</keyword>
<organism>
    <name type="scientific">Ranunculus macranthus</name>
    <name type="common">Large buttercup</name>
    <dbReference type="NCBI Taxonomy" id="334596"/>
    <lineage>
        <taxon>Eukaryota</taxon>
        <taxon>Viridiplantae</taxon>
        <taxon>Streptophyta</taxon>
        <taxon>Embryophyta</taxon>
        <taxon>Tracheophyta</taxon>
        <taxon>Spermatophyta</taxon>
        <taxon>Magnoliopsida</taxon>
        <taxon>Ranunculales</taxon>
        <taxon>Ranunculaceae</taxon>
        <taxon>Ranunculoideae</taxon>
        <taxon>Ranunculeae</taxon>
        <taxon>Ranunculus</taxon>
    </lineage>
</organism>
<reference key="1">
    <citation type="journal article" date="2007" name="BMC Genomics">
        <title>Comparative chloroplast genomics: analyses including new sequences from the angiosperms Nuphar advena and Ranunculus macranthus.</title>
        <authorList>
            <person name="Raubeson L.A."/>
            <person name="Peery R."/>
            <person name="Chumley T.W."/>
            <person name="Dziubek C."/>
            <person name="Fourcade H.M."/>
            <person name="Boore J.L."/>
            <person name="Jansen R.K."/>
        </authorList>
    </citation>
    <scope>NUCLEOTIDE SEQUENCE [LARGE SCALE GENOMIC DNA]</scope>
</reference>
<comment type="function">
    <text evidence="1">Probable ATPase of unknown function. Its presence in a non-photosynthetic plant (Epifagus virginiana) and experiments in tobacco indicate that it has an essential function which is probably not related to photosynthesis.</text>
</comment>
<comment type="subcellular location">
    <subcellularLocation>
        <location evidence="1">Plastid</location>
        <location evidence="1">Chloroplast stroma</location>
    </subcellularLocation>
</comment>
<comment type="similarity">
    <text evidence="1">Belongs to the Ycf2 family.</text>
</comment>
<gene>
    <name evidence="1" type="primary">ycf2-A</name>
</gene>
<gene>
    <name evidence="1" type="primary">ycf2-B</name>
</gene>